<proteinExistence type="inferred from homology"/>
<sequence length="447" mass="48815">MNKNTWVIGFTLFAMFFGAGNLIFPPNLGLDSGQFFWPAILAFVLTGIGLPLLGVIVGALDKEGYIGALNKISPKFSILFLIIIYLTIGPLFAIPRTASTSFEMTITPIIHSNSSIALFIFTIIYFIVVLYICLNPSKLIDRIGSLLTPLLLITILAMIIKGYLDFSGNSAGKGNEALYHSNFSSFAEGFTQGYLTMDAIAAIAFSMIVVNAVKLTGITKTNQIFKQTLTAGLIAAVALIFIYISLGYIGNHMPVSDMTLDQLKSKDRNIGTYLLTTMASTGFGSFGKYLLGIIVALACLTTACGLIVAVSEYFHRIVPKVSYKAFVLVFILMSFIIANQGLNAVISMSIPVLSIVYPVAITVVLLILIAKFIPTKRISQQIPVIIVFILSIFSVISKLGWLKINFIESLPLRAYSLEWFPVAIIATILGYLVGIFVKQDPIKYQQE</sequence>
<protein>
    <recommendedName>
        <fullName>Putative branched-chain amino acid carrier protein SAUSA300_1300</fullName>
    </recommendedName>
</protein>
<evidence type="ECO:0000250" key="1"/>
<evidence type="ECO:0000255" key="2"/>
<evidence type="ECO:0000305" key="3"/>
<reference key="1">
    <citation type="journal article" date="2006" name="Lancet">
        <title>Complete genome sequence of USA300, an epidemic clone of community-acquired meticillin-resistant Staphylococcus aureus.</title>
        <authorList>
            <person name="Diep B.A."/>
            <person name="Gill S.R."/>
            <person name="Chang R.F."/>
            <person name="Phan T.H."/>
            <person name="Chen J.H."/>
            <person name="Davidson M.G."/>
            <person name="Lin F."/>
            <person name="Lin J."/>
            <person name="Carleton H.A."/>
            <person name="Mongodin E.F."/>
            <person name="Sensabaugh G.F."/>
            <person name="Perdreau-Remington F."/>
        </authorList>
    </citation>
    <scope>NUCLEOTIDE SEQUENCE [LARGE SCALE GENOMIC DNA]</scope>
    <source>
        <strain>USA300</strain>
    </source>
</reference>
<name>BRNQL_STAA3</name>
<feature type="chain" id="PRO_0000294019" description="Putative branched-chain amino acid carrier protein SAUSA300_1300">
    <location>
        <begin position="1"/>
        <end position="447"/>
    </location>
</feature>
<feature type="transmembrane region" description="Helical" evidence="2">
    <location>
        <begin position="6"/>
        <end position="26"/>
    </location>
</feature>
<feature type="transmembrane region" description="Helical" evidence="2">
    <location>
        <begin position="40"/>
        <end position="60"/>
    </location>
</feature>
<feature type="transmembrane region" description="Helical" evidence="2">
    <location>
        <begin position="74"/>
        <end position="94"/>
    </location>
</feature>
<feature type="transmembrane region" description="Helical" evidence="2">
    <location>
        <begin position="114"/>
        <end position="134"/>
    </location>
</feature>
<feature type="transmembrane region" description="Helical" evidence="2">
    <location>
        <begin position="143"/>
        <end position="163"/>
    </location>
</feature>
<feature type="transmembrane region" description="Helical" evidence="2">
    <location>
        <begin position="193"/>
        <end position="213"/>
    </location>
</feature>
<feature type="transmembrane region" description="Helical" evidence="2">
    <location>
        <begin position="229"/>
        <end position="249"/>
    </location>
</feature>
<feature type="transmembrane region" description="Helical" evidence="2">
    <location>
        <begin position="290"/>
        <end position="310"/>
    </location>
</feature>
<feature type="transmembrane region" description="Helical" evidence="2">
    <location>
        <begin position="326"/>
        <end position="346"/>
    </location>
</feature>
<feature type="transmembrane region" description="Helical" evidence="2">
    <location>
        <begin position="350"/>
        <end position="370"/>
    </location>
</feature>
<feature type="transmembrane region" description="Helical" evidence="2">
    <location>
        <begin position="382"/>
        <end position="402"/>
    </location>
</feature>
<feature type="transmembrane region" description="Helical" evidence="2">
    <location>
        <begin position="417"/>
        <end position="437"/>
    </location>
</feature>
<keyword id="KW-0029">Amino-acid transport</keyword>
<keyword id="KW-1003">Cell membrane</keyword>
<keyword id="KW-0472">Membrane</keyword>
<keyword id="KW-0812">Transmembrane</keyword>
<keyword id="KW-1133">Transmembrane helix</keyword>
<keyword id="KW-0813">Transport</keyword>
<gene>
    <name type="ordered locus">SAUSA300_1300</name>
</gene>
<organism>
    <name type="scientific">Staphylococcus aureus (strain USA300)</name>
    <dbReference type="NCBI Taxonomy" id="367830"/>
    <lineage>
        <taxon>Bacteria</taxon>
        <taxon>Bacillati</taxon>
        <taxon>Bacillota</taxon>
        <taxon>Bacilli</taxon>
        <taxon>Bacillales</taxon>
        <taxon>Staphylococcaceae</taxon>
        <taxon>Staphylococcus</taxon>
    </lineage>
</organism>
<comment type="function">
    <text evidence="1 3">Component of the transport system for branched-chain amino acids (leucine, isoleucine and valine), which is coupled to a proton motive force (Potential). Contributes to NaCl tolerance (By similarity).</text>
</comment>
<comment type="subcellular location">
    <subcellularLocation>
        <location evidence="3">Cell membrane</location>
        <topology evidence="3">Multi-pass membrane protein</topology>
    </subcellularLocation>
</comment>
<comment type="similarity">
    <text evidence="3">Belongs to the branched chain amino acid transporter family.</text>
</comment>
<dbReference type="EMBL" id="CP000255">
    <property type="protein sequence ID" value="ABD22732.1"/>
    <property type="molecule type" value="Genomic_DNA"/>
</dbReference>
<dbReference type="KEGG" id="saa:SAUSA300_1300"/>
<dbReference type="HOGENOM" id="CLU_036807_0_1_9"/>
<dbReference type="OMA" id="IWPAGPI"/>
<dbReference type="Proteomes" id="UP000001939">
    <property type="component" value="Chromosome"/>
</dbReference>
<dbReference type="GO" id="GO:0005886">
    <property type="term" value="C:plasma membrane"/>
    <property type="evidence" value="ECO:0007669"/>
    <property type="project" value="UniProtKB-SubCell"/>
</dbReference>
<dbReference type="GO" id="GO:0015188">
    <property type="term" value="F:L-isoleucine transmembrane transporter activity"/>
    <property type="evidence" value="ECO:0007669"/>
    <property type="project" value="TreeGrafter"/>
</dbReference>
<dbReference type="GO" id="GO:0015190">
    <property type="term" value="F:L-leucine transmembrane transporter activity"/>
    <property type="evidence" value="ECO:0007669"/>
    <property type="project" value="TreeGrafter"/>
</dbReference>
<dbReference type="GO" id="GO:0005304">
    <property type="term" value="F:L-valine transmembrane transporter activity"/>
    <property type="evidence" value="ECO:0007669"/>
    <property type="project" value="TreeGrafter"/>
</dbReference>
<dbReference type="GO" id="GO:0015818">
    <property type="term" value="P:isoleucine transport"/>
    <property type="evidence" value="ECO:0007669"/>
    <property type="project" value="TreeGrafter"/>
</dbReference>
<dbReference type="GO" id="GO:0015820">
    <property type="term" value="P:L-leucine transport"/>
    <property type="evidence" value="ECO:0007669"/>
    <property type="project" value="TreeGrafter"/>
</dbReference>
<dbReference type="FunFam" id="1.20.1740.10:FF:000068">
    <property type="entry name" value="Branched-chain amino acid transport system carrier protein"/>
    <property type="match status" value="1"/>
</dbReference>
<dbReference type="Gene3D" id="1.20.1740.10">
    <property type="entry name" value="Amino acid/polyamine transporter I"/>
    <property type="match status" value="1"/>
</dbReference>
<dbReference type="InterPro" id="IPR004685">
    <property type="entry name" value="Brnchd-chn_aa_trnsp_Livcs"/>
</dbReference>
<dbReference type="NCBIfam" id="TIGR00796">
    <property type="entry name" value="livcs"/>
    <property type="match status" value="1"/>
</dbReference>
<dbReference type="PANTHER" id="PTHR30588:SF7">
    <property type="entry name" value="BRANCHED-CHAIN AMINO ACID CARRIER PROTEIN SAOUHSC_01411-RELATED"/>
    <property type="match status" value="1"/>
</dbReference>
<dbReference type="PANTHER" id="PTHR30588">
    <property type="entry name" value="BRANCHED-CHAIN AMINO ACID TRANSPORT SYSTEM 2 CARRIER PROTEIN"/>
    <property type="match status" value="1"/>
</dbReference>
<dbReference type="Pfam" id="PF05525">
    <property type="entry name" value="Branch_AA_trans"/>
    <property type="match status" value="1"/>
</dbReference>
<accession>Q2FH31</accession>